<keyword id="KW-0067">ATP-binding</keyword>
<keyword id="KW-0963">Cytoplasm</keyword>
<keyword id="KW-0324">Glycolysis</keyword>
<keyword id="KW-0418">Kinase</keyword>
<keyword id="KW-0547">Nucleotide-binding</keyword>
<keyword id="KW-1185">Reference proteome</keyword>
<keyword id="KW-0808">Transferase</keyword>
<proteinExistence type="inferred from homology"/>
<gene>
    <name evidence="1" type="primary">pgk</name>
    <name type="ordered locus">LHK_00045</name>
</gene>
<reference key="1">
    <citation type="journal article" date="2009" name="PLoS Genet.">
        <title>The complete genome and proteome of Laribacter hongkongensis reveal potential mechanisms for adaptations to different temperatures and habitats.</title>
        <authorList>
            <person name="Woo P.C.Y."/>
            <person name="Lau S.K.P."/>
            <person name="Tse H."/>
            <person name="Teng J.L.L."/>
            <person name="Curreem S.O."/>
            <person name="Tsang A.K.L."/>
            <person name="Fan R.Y.Y."/>
            <person name="Wong G.K.M."/>
            <person name="Huang Y."/>
            <person name="Loman N.J."/>
            <person name="Snyder L.A.S."/>
            <person name="Cai J.J."/>
            <person name="Huang J.-D."/>
            <person name="Mak W."/>
            <person name="Pallen M.J."/>
            <person name="Lok S."/>
            <person name="Yuen K.-Y."/>
        </authorList>
    </citation>
    <scope>NUCLEOTIDE SEQUENCE [LARGE SCALE GENOMIC DNA]</scope>
    <source>
        <strain>HLHK9</strain>
    </source>
</reference>
<feature type="chain" id="PRO_1000192835" description="Phosphoglycerate kinase">
    <location>
        <begin position="1"/>
        <end position="390"/>
    </location>
</feature>
<feature type="binding site" evidence="1">
    <location>
        <begin position="21"/>
        <end position="23"/>
    </location>
    <ligand>
        <name>substrate</name>
    </ligand>
</feature>
<feature type="binding site" evidence="1">
    <location>
        <position position="36"/>
    </location>
    <ligand>
        <name>substrate</name>
    </ligand>
</feature>
<feature type="binding site" evidence="1">
    <location>
        <begin position="59"/>
        <end position="62"/>
    </location>
    <ligand>
        <name>substrate</name>
    </ligand>
</feature>
<feature type="binding site" evidence="1">
    <location>
        <position position="113"/>
    </location>
    <ligand>
        <name>substrate</name>
    </ligand>
</feature>
<feature type="binding site" evidence="1">
    <location>
        <position position="146"/>
    </location>
    <ligand>
        <name>substrate</name>
    </ligand>
</feature>
<feature type="binding site" evidence="1">
    <location>
        <position position="197"/>
    </location>
    <ligand>
        <name>ATP</name>
        <dbReference type="ChEBI" id="CHEBI:30616"/>
    </ligand>
</feature>
<feature type="binding site" evidence="1">
    <location>
        <position position="319"/>
    </location>
    <ligand>
        <name>ATP</name>
        <dbReference type="ChEBI" id="CHEBI:30616"/>
    </ligand>
</feature>
<feature type="binding site" evidence="1">
    <location>
        <begin position="345"/>
        <end position="348"/>
    </location>
    <ligand>
        <name>ATP</name>
        <dbReference type="ChEBI" id="CHEBI:30616"/>
    </ligand>
</feature>
<evidence type="ECO:0000255" key="1">
    <source>
        <dbReference type="HAMAP-Rule" id="MF_00145"/>
    </source>
</evidence>
<organism>
    <name type="scientific">Laribacter hongkongensis (strain HLHK9)</name>
    <dbReference type="NCBI Taxonomy" id="557598"/>
    <lineage>
        <taxon>Bacteria</taxon>
        <taxon>Pseudomonadati</taxon>
        <taxon>Pseudomonadota</taxon>
        <taxon>Betaproteobacteria</taxon>
        <taxon>Neisseriales</taxon>
        <taxon>Aquaspirillaceae</taxon>
        <taxon>Laribacter</taxon>
    </lineage>
</organism>
<protein>
    <recommendedName>
        <fullName evidence="1">Phosphoglycerate kinase</fullName>
        <ecNumber evidence="1">2.7.2.3</ecNumber>
    </recommendedName>
</protein>
<comment type="catalytic activity">
    <reaction evidence="1">
        <text>(2R)-3-phosphoglycerate + ATP = (2R)-3-phospho-glyceroyl phosphate + ADP</text>
        <dbReference type="Rhea" id="RHEA:14801"/>
        <dbReference type="ChEBI" id="CHEBI:30616"/>
        <dbReference type="ChEBI" id="CHEBI:57604"/>
        <dbReference type="ChEBI" id="CHEBI:58272"/>
        <dbReference type="ChEBI" id="CHEBI:456216"/>
        <dbReference type="EC" id="2.7.2.3"/>
    </reaction>
</comment>
<comment type="pathway">
    <text evidence="1">Carbohydrate degradation; glycolysis; pyruvate from D-glyceraldehyde 3-phosphate: step 2/5.</text>
</comment>
<comment type="subunit">
    <text evidence="1">Monomer.</text>
</comment>
<comment type="subcellular location">
    <subcellularLocation>
        <location evidence="1">Cytoplasm</location>
    </subcellularLocation>
</comment>
<comment type="similarity">
    <text evidence="1">Belongs to the phosphoglycerate kinase family.</text>
</comment>
<sequence length="390" mass="40939">MQFKKLTEQSLAGKRVLIRVDMNVPVKNGVIGDDTRIRASLPSILHCLKAGASVILMTHLGRPTEGEPKPEDSLAPVARRLSELLAQEVKVIADWQAGIDLKAGDVVMLENVRLNKGEKKNNEELGRAYAGLCDVFVNDAFGTAHRAEASTHAVAQFAPVACAGVLLAAELDALGRALEAPARPLVAIVAGSKVSTKLTILEALADKVDQLIVGGGIANTFLLAEGKNIGKSLAEADLVGEAKKVIEKIRAHGGNVPLPTDVVVAPEFSENAEDTLKNVADVTRDDMILDIGPDSARVLAEIVAKAGTVVWNGPVGVFEFEQFSHGTRTLAEAIAESKAFSIAGGGDTLSAIAKFGVTDRISYISTGGGAFLEFLEGKELPAVAMLAARA</sequence>
<accession>C1D9S8</accession>
<dbReference type="EC" id="2.7.2.3" evidence="1"/>
<dbReference type="EMBL" id="CP001154">
    <property type="protein sequence ID" value="ACO73041.1"/>
    <property type="molecule type" value="Genomic_DNA"/>
</dbReference>
<dbReference type="RefSeq" id="WP_012695536.1">
    <property type="nucleotide sequence ID" value="NC_012559.1"/>
</dbReference>
<dbReference type="SMR" id="C1D9S8"/>
<dbReference type="STRING" id="557598.LHK_00045"/>
<dbReference type="KEGG" id="lhk:LHK_00045"/>
<dbReference type="eggNOG" id="COG0126">
    <property type="taxonomic scope" value="Bacteria"/>
</dbReference>
<dbReference type="HOGENOM" id="CLU_025427_0_2_4"/>
<dbReference type="UniPathway" id="UPA00109">
    <property type="reaction ID" value="UER00185"/>
</dbReference>
<dbReference type="Proteomes" id="UP000002010">
    <property type="component" value="Chromosome"/>
</dbReference>
<dbReference type="GO" id="GO:0005829">
    <property type="term" value="C:cytosol"/>
    <property type="evidence" value="ECO:0007669"/>
    <property type="project" value="TreeGrafter"/>
</dbReference>
<dbReference type="GO" id="GO:0043531">
    <property type="term" value="F:ADP binding"/>
    <property type="evidence" value="ECO:0007669"/>
    <property type="project" value="TreeGrafter"/>
</dbReference>
<dbReference type="GO" id="GO:0005524">
    <property type="term" value="F:ATP binding"/>
    <property type="evidence" value="ECO:0007669"/>
    <property type="project" value="UniProtKB-KW"/>
</dbReference>
<dbReference type="GO" id="GO:0004618">
    <property type="term" value="F:phosphoglycerate kinase activity"/>
    <property type="evidence" value="ECO:0007669"/>
    <property type="project" value="UniProtKB-UniRule"/>
</dbReference>
<dbReference type="GO" id="GO:0006094">
    <property type="term" value="P:gluconeogenesis"/>
    <property type="evidence" value="ECO:0007669"/>
    <property type="project" value="TreeGrafter"/>
</dbReference>
<dbReference type="GO" id="GO:0006096">
    <property type="term" value="P:glycolytic process"/>
    <property type="evidence" value="ECO:0007669"/>
    <property type="project" value="UniProtKB-UniRule"/>
</dbReference>
<dbReference type="FunFam" id="3.40.50.1260:FF:000001">
    <property type="entry name" value="Phosphoglycerate kinase"/>
    <property type="match status" value="1"/>
</dbReference>
<dbReference type="FunFam" id="3.40.50.1260:FF:000002">
    <property type="entry name" value="Phosphoglycerate kinase"/>
    <property type="match status" value="1"/>
</dbReference>
<dbReference type="Gene3D" id="3.40.50.1260">
    <property type="entry name" value="Phosphoglycerate kinase, N-terminal domain"/>
    <property type="match status" value="2"/>
</dbReference>
<dbReference type="HAMAP" id="MF_00145">
    <property type="entry name" value="Phosphoglyc_kinase"/>
    <property type="match status" value="1"/>
</dbReference>
<dbReference type="InterPro" id="IPR001576">
    <property type="entry name" value="Phosphoglycerate_kinase"/>
</dbReference>
<dbReference type="InterPro" id="IPR015911">
    <property type="entry name" value="Phosphoglycerate_kinase_CS"/>
</dbReference>
<dbReference type="InterPro" id="IPR015824">
    <property type="entry name" value="Phosphoglycerate_kinase_N"/>
</dbReference>
<dbReference type="InterPro" id="IPR036043">
    <property type="entry name" value="Phosphoglycerate_kinase_sf"/>
</dbReference>
<dbReference type="PANTHER" id="PTHR11406">
    <property type="entry name" value="PHOSPHOGLYCERATE KINASE"/>
    <property type="match status" value="1"/>
</dbReference>
<dbReference type="PANTHER" id="PTHR11406:SF23">
    <property type="entry name" value="PHOSPHOGLYCERATE KINASE 1, CHLOROPLASTIC-RELATED"/>
    <property type="match status" value="1"/>
</dbReference>
<dbReference type="Pfam" id="PF00162">
    <property type="entry name" value="PGK"/>
    <property type="match status" value="1"/>
</dbReference>
<dbReference type="PIRSF" id="PIRSF000724">
    <property type="entry name" value="Pgk"/>
    <property type="match status" value="1"/>
</dbReference>
<dbReference type="PRINTS" id="PR00477">
    <property type="entry name" value="PHGLYCKINASE"/>
</dbReference>
<dbReference type="SUPFAM" id="SSF53748">
    <property type="entry name" value="Phosphoglycerate kinase"/>
    <property type="match status" value="1"/>
</dbReference>
<dbReference type="PROSITE" id="PS00111">
    <property type="entry name" value="PGLYCERATE_KINASE"/>
    <property type="match status" value="1"/>
</dbReference>
<name>PGK_LARHH</name>